<protein>
    <recommendedName>
        <fullName>DNA polymerase zeta processivity subunit</fullName>
    </recommendedName>
    <alternativeName>
        <fullName>Revertibility protein 7</fullName>
    </alternativeName>
</protein>
<proteinExistence type="evidence at protein level"/>
<comment type="function">
    <text evidence="2 3 5 6">Required for DNA damage induced mutagenesis. Involved in DNA repair, mitochondrial DNA repair and translesion synthesis. Has a role in the bypass of abasic (AP) sites.</text>
</comment>
<comment type="subunit">
    <text evidence="4 6">Forms DNA polymerase zeta with REV3 (PubMed:8658138). Interacts with REV1 (PubMed:18242152).</text>
</comment>
<comment type="interaction">
    <interactant intactId="EBI-14960">
        <id>P38927</id>
    </interactant>
    <interactant intactId="EBI-30769">
        <id>Q08949</id>
        <label>DDC1</label>
    </interactant>
    <organismsDiffer>false</organismsDiffer>
    <experiments>3</experiments>
</comment>
<comment type="interaction">
    <interactant intactId="EBI-14960">
        <id>P38927</id>
    </interactant>
    <interactant intactId="EBI-10658">
        <id>Q02574</id>
        <label>MEC3</label>
    </interactant>
    <organismsDiffer>false</organismsDiffer>
    <experiments>3</experiments>
</comment>
<comment type="interaction">
    <interactant intactId="EBI-14960">
        <id>P38927</id>
    </interactant>
    <interactant intactId="EBI-14951">
        <id>P12689</id>
        <label>REV1</label>
    </interactant>
    <organismsDiffer>false</organismsDiffer>
    <experiments>3</experiments>
</comment>
<comment type="interaction">
    <interactant intactId="EBI-14960">
        <id>P38927</id>
    </interactant>
    <interactant intactId="EBI-6155">
        <id>P14284</id>
        <label>REV3</label>
    </interactant>
    <organismsDiffer>false</organismsDiffer>
    <experiments>3</experiments>
</comment>
<comment type="subcellular location">
    <subcellularLocation>
        <location evidence="3">Mitochondrion</location>
    </subcellularLocation>
</comment>
<comment type="similarity">
    <text evidence="7">Belongs to the MAD2 family.</text>
</comment>
<name>REV7_YEAST</name>
<accession>P38927</accession>
<accession>D6VVE7</accession>
<organism>
    <name type="scientific">Saccharomyces cerevisiae (strain ATCC 204508 / S288c)</name>
    <name type="common">Baker's yeast</name>
    <dbReference type="NCBI Taxonomy" id="559292"/>
    <lineage>
        <taxon>Eukaryota</taxon>
        <taxon>Fungi</taxon>
        <taxon>Dikarya</taxon>
        <taxon>Ascomycota</taxon>
        <taxon>Saccharomycotina</taxon>
        <taxon>Saccharomycetes</taxon>
        <taxon>Saccharomycetales</taxon>
        <taxon>Saccharomycetaceae</taxon>
        <taxon>Saccharomyces</taxon>
    </lineage>
</organism>
<sequence length="245" mass="28760">MNRWVEKWLRVYLKCYINLILFYRNVYPPQSFDYTTYQSFNLPQFVPINRHPALIDYIEELILDVLSKLTHVYRFSICIINKKNDLCIEKYVLDFSELQHVDKDDQIITETEVFDEFRSSLNSLIMHLEKLPKVNDDTITFEAVINAIELELGHKLDRNRRVDSLEEKAEIERDSNWVKCQEDENLPDNNGFQPPKIKLTSLVGSDVGPLIIHQFSEKLISGDDKILNGVYSQYEEGESIFGSLF</sequence>
<keyword id="KW-0002">3D-structure</keyword>
<keyword id="KW-0227">DNA damage</keyword>
<keyword id="KW-0234">DNA repair</keyword>
<keyword id="KW-0496">Mitochondrion</keyword>
<keyword id="KW-1185">Reference proteome</keyword>
<feature type="chain" id="PRO_0000126116" description="DNA polymerase zeta processivity subunit">
    <location>
        <begin position="1"/>
        <end position="245"/>
    </location>
</feature>
<feature type="domain" description="HORMA" evidence="1">
    <location>
        <begin position="3"/>
        <end position="203"/>
    </location>
</feature>
<feature type="helix" evidence="9">
    <location>
        <begin position="2"/>
        <end position="23"/>
    </location>
</feature>
<feature type="strand" evidence="8">
    <location>
        <begin position="24"/>
        <end position="27"/>
    </location>
</feature>
<feature type="strand" evidence="9">
    <location>
        <begin position="31"/>
        <end position="33"/>
    </location>
</feature>
<feature type="strand" evidence="9">
    <location>
        <begin position="38"/>
        <end position="41"/>
    </location>
</feature>
<feature type="strand" evidence="9">
    <location>
        <begin position="48"/>
        <end position="50"/>
    </location>
</feature>
<feature type="helix" evidence="9">
    <location>
        <begin position="52"/>
        <end position="67"/>
    </location>
</feature>
<feature type="turn" evidence="9">
    <location>
        <begin position="68"/>
        <end position="71"/>
    </location>
</feature>
<feature type="strand" evidence="9">
    <location>
        <begin position="72"/>
        <end position="81"/>
    </location>
</feature>
<feature type="turn" evidence="9">
    <location>
        <begin position="82"/>
        <end position="84"/>
    </location>
</feature>
<feature type="strand" evidence="9">
    <location>
        <begin position="87"/>
        <end position="94"/>
    </location>
</feature>
<feature type="helix" evidence="9">
    <location>
        <begin position="110"/>
        <end position="130"/>
    </location>
</feature>
<feature type="strand" evidence="9">
    <location>
        <begin position="139"/>
        <end position="147"/>
    </location>
</feature>
<feature type="turn" evidence="9">
    <location>
        <begin position="155"/>
        <end position="158"/>
    </location>
</feature>
<feature type="helix" evidence="9">
    <location>
        <begin position="165"/>
        <end position="174"/>
    </location>
</feature>
<feature type="strand" evidence="9">
    <location>
        <begin position="177"/>
        <end position="179"/>
    </location>
</feature>
<feature type="strand" evidence="9">
    <location>
        <begin position="191"/>
        <end position="193"/>
    </location>
</feature>
<feature type="strand" evidence="9">
    <location>
        <begin position="200"/>
        <end position="202"/>
    </location>
</feature>
<feature type="strand" evidence="9">
    <location>
        <begin position="207"/>
        <end position="209"/>
    </location>
</feature>
<feature type="strand" evidence="9">
    <location>
        <begin position="213"/>
        <end position="218"/>
    </location>
</feature>
<feature type="strand" evidence="9">
    <location>
        <begin position="223"/>
        <end position="226"/>
    </location>
</feature>
<feature type="helix" evidence="9">
    <location>
        <begin position="240"/>
        <end position="242"/>
    </location>
</feature>
<reference key="1">
    <citation type="journal article" date="1994" name="Yeast">
        <title>Cloning and sequence of REV7, a gene whose function is required for DNA damage-induced mutagenesis in Saccharomyces cerevisiae.</title>
        <authorList>
            <person name="Torpey L.E."/>
            <person name="Gibbs P.E.M."/>
            <person name="Nelson J."/>
            <person name="Lawrence C.W."/>
        </authorList>
    </citation>
    <scope>NUCLEOTIDE SEQUENCE [GENOMIC DNA]</scope>
    <scope>FUNCTION</scope>
</reference>
<reference key="2">
    <citation type="journal article" date="1997" name="Nature">
        <title>The nucleotide sequence of Saccharomyces cerevisiae chromosome IX.</title>
        <authorList>
            <person name="Churcher C.M."/>
            <person name="Bowman S."/>
            <person name="Badcock K."/>
            <person name="Bankier A.T."/>
            <person name="Brown D."/>
            <person name="Chillingworth T."/>
            <person name="Connor R."/>
            <person name="Devlin K."/>
            <person name="Gentles S."/>
            <person name="Hamlin N."/>
            <person name="Harris D.E."/>
            <person name="Horsnell T."/>
            <person name="Hunt S."/>
            <person name="Jagels K."/>
            <person name="Jones M."/>
            <person name="Lye G."/>
            <person name="Moule S."/>
            <person name="Odell C."/>
            <person name="Pearson D."/>
            <person name="Rajandream M.A."/>
            <person name="Rice P."/>
            <person name="Rowley N."/>
            <person name="Skelton J."/>
            <person name="Smith V."/>
            <person name="Walsh S.V."/>
            <person name="Whitehead S."/>
            <person name="Barrell B.G."/>
        </authorList>
    </citation>
    <scope>NUCLEOTIDE SEQUENCE [LARGE SCALE GENOMIC DNA]</scope>
    <source>
        <strain>ATCC 204508 / S288c</strain>
    </source>
</reference>
<reference key="3">
    <citation type="journal article" date="2014" name="G3 (Bethesda)">
        <title>The reference genome sequence of Saccharomyces cerevisiae: Then and now.</title>
        <authorList>
            <person name="Engel S.R."/>
            <person name="Dietrich F.S."/>
            <person name="Fisk D.G."/>
            <person name="Binkley G."/>
            <person name="Balakrishnan R."/>
            <person name="Costanzo M.C."/>
            <person name="Dwight S.S."/>
            <person name="Hitz B.C."/>
            <person name="Karra K."/>
            <person name="Nash R.S."/>
            <person name="Weng S."/>
            <person name="Wong E.D."/>
            <person name="Lloyd P."/>
            <person name="Skrzypek M.S."/>
            <person name="Miyasato S.R."/>
            <person name="Simison M."/>
            <person name="Cherry J.M."/>
        </authorList>
    </citation>
    <scope>GENOME REANNOTATION</scope>
    <source>
        <strain>ATCC 204508 / S288c</strain>
    </source>
</reference>
<reference key="4">
    <citation type="journal article" date="1996" name="Science">
        <title>Thymine-thymine dimer bypass by yeast DNA polymerase zeta.</title>
        <authorList>
            <person name="Nelson J.R."/>
            <person name="Lawrence C.W."/>
            <person name="Hinkle D.C."/>
        </authorList>
    </citation>
    <scope>FUNCTION</scope>
    <scope>INTERACTION WITH REV3</scope>
</reference>
<reference key="5">
    <citation type="journal article" date="2001" name="Genes Dev.">
        <title>Roles of yeast DNA polymerases delta and zeta and of Rev1 in the bypass of abasic sites.</title>
        <authorList>
            <person name="Haracska L."/>
            <person name="Unk I."/>
            <person name="Johnson R.E."/>
            <person name="Johansson E."/>
            <person name="Burgers P.M.J."/>
            <person name="Prakash S."/>
            <person name="Prakash L."/>
        </authorList>
    </citation>
    <scope>FUNCTION</scope>
</reference>
<reference key="6">
    <citation type="journal article" date="2006" name="Genetics">
        <title>Saccharomyces cerevisiae polymerase zeta functions in mitochondria.</title>
        <authorList>
            <person name="Zhang H."/>
            <person name="Chatterjee A."/>
            <person name="Singh K.K."/>
        </authorList>
    </citation>
    <scope>FUNCTION</scope>
    <scope>SUBCELLULAR LOCATION</scope>
</reference>
<reference key="7">
    <citation type="journal article" date="2008" name="DNA Repair">
        <title>Comparative analysis of in vivo interactions between Rev1 protein and other Y-family DNA polymerases in animals and yeasts.</title>
        <authorList>
            <person name="Kosarek J.N."/>
            <person name="Woodruff R.V."/>
            <person name="Rivera-Begeman A."/>
            <person name="Guo C."/>
            <person name="D'Souza S."/>
            <person name="Koonin E.V."/>
            <person name="Walker G.C."/>
            <person name="Friedberg E.C."/>
        </authorList>
    </citation>
    <scope>INTERACTION WITH REV1</scope>
</reference>
<evidence type="ECO:0000255" key="1">
    <source>
        <dbReference type="PROSITE-ProRule" id="PRU00109"/>
    </source>
</evidence>
<evidence type="ECO:0000269" key="2">
    <source>
    </source>
</evidence>
<evidence type="ECO:0000269" key="3">
    <source>
    </source>
</evidence>
<evidence type="ECO:0000269" key="4">
    <source>
    </source>
</evidence>
<evidence type="ECO:0000269" key="5">
    <source>
    </source>
</evidence>
<evidence type="ECO:0000269" key="6">
    <source>
    </source>
</evidence>
<evidence type="ECO:0000305" key="7"/>
<evidence type="ECO:0007829" key="8">
    <source>
        <dbReference type="PDB" id="7S0T"/>
    </source>
</evidence>
<evidence type="ECO:0007829" key="9">
    <source>
        <dbReference type="PDB" id="8TLT"/>
    </source>
</evidence>
<gene>
    <name type="primary">REV7</name>
    <name type="ordered locus">YIL139C</name>
</gene>
<dbReference type="EMBL" id="Z38059">
    <property type="protein sequence ID" value="CAA86139.1"/>
    <property type="molecule type" value="Genomic_DNA"/>
</dbReference>
<dbReference type="EMBL" id="U07228">
    <property type="protein sequence ID" value="AAA67918.1"/>
    <property type="molecule type" value="Genomic_DNA"/>
</dbReference>
<dbReference type="EMBL" id="U49845">
    <property type="protein sequence ID" value="AAA98667.1"/>
    <property type="molecule type" value="Genomic_DNA"/>
</dbReference>
<dbReference type="EMBL" id="BK006942">
    <property type="protein sequence ID" value="DAA08413.1"/>
    <property type="molecule type" value="Genomic_DNA"/>
</dbReference>
<dbReference type="PIR" id="S48395">
    <property type="entry name" value="S48395"/>
</dbReference>
<dbReference type="RefSeq" id="NP_012127.1">
    <property type="nucleotide sequence ID" value="NM_001179487.1"/>
</dbReference>
<dbReference type="PDB" id="6V8P">
    <property type="method" value="EM"/>
    <property type="resolution" value="4.10 A"/>
    <property type="chains" value="D/E=1-245"/>
</dbReference>
<dbReference type="PDB" id="6V93">
    <property type="method" value="EM"/>
    <property type="resolution" value="3.10 A"/>
    <property type="chains" value="D/E=1-245"/>
</dbReference>
<dbReference type="PDB" id="7LXD">
    <property type="method" value="EM"/>
    <property type="resolution" value="4.11 A"/>
    <property type="chains" value="D/E=1-245"/>
</dbReference>
<dbReference type="PDB" id="7S0T">
    <property type="method" value="EM"/>
    <property type="resolution" value="3.05 A"/>
    <property type="chains" value="D/E=1-245"/>
</dbReference>
<dbReference type="PDB" id="8TLQ">
    <property type="method" value="EM"/>
    <property type="resolution" value="3.53 A"/>
    <property type="chains" value="D/E=1-245"/>
</dbReference>
<dbReference type="PDB" id="8TLT">
    <property type="method" value="EM"/>
    <property type="resolution" value="2.85 A"/>
    <property type="chains" value="D/E=1-245"/>
</dbReference>
<dbReference type="PDBsum" id="6V8P"/>
<dbReference type="PDBsum" id="6V93"/>
<dbReference type="PDBsum" id="7LXD"/>
<dbReference type="PDBsum" id="7S0T"/>
<dbReference type="PDBsum" id="8TLQ"/>
<dbReference type="PDBsum" id="8TLT"/>
<dbReference type="EMDB" id="EMD-21108"/>
<dbReference type="EMDB" id="EMD-21115"/>
<dbReference type="EMDB" id="EMD-23570"/>
<dbReference type="EMDB" id="EMD-2409"/>
<dbReference type="EMDB" id="EMD-24793"/>
<dbReference type="EMDB" id="EMD-41371"/>
<dbReference type="EMDB" id="EMD-41372"/>
<dbReference type="SMR" id="P38927"/>
<dbReference type="BioGRID" id="34852">
    <property type="interactions" value="84"/>
</dbReference>
<dbReference type="ComplexPortal" id="CPX-1091">
    <property type="entry name" value="DNA polymerase zeta complex"/>
</dbReference>
<dbReference type="DIP" id="DIP-819N"/>
<dbReference type="FunCoup" id="P38927">
    <property type="interactions" value="62"/>
</dbReference>
<dbReference type="IntAct" id="P38927">
    <property type="interactions" value="6"/>
</dbReference>
<dbReference type="STRING" id="4932.YIL139C"/>
<dbReference type="iPTMnet" id="P38927"/>
<dbReference type="PaxDb" id="4932-YIL139C"/>
<dbReference type="PeptideAtlas" id="P38927"/>
<dbReference type="EnsemblFungi" id="YIL139C_mRNA">
    <property type="protein sequence ID" value="YIL139C"/>
    <property type="gene ID" value="YIL139C"/>
</dbReference>
<dbReference type="GeneID" id="854667"/>
<dbReference type="KEGG" id="sce:YIL139C"/>
<dbReference type="AGR" id="SGD:S000001401"/>
<dbReference type="SGD" id="S000001401">
    <property type="gene designation" value="REV7"/>
</dbReference>
<dbReference type="VEuPathDB" id="FungiDB:YIL139C"/>
<dbReference type="eggNOG" id="ENOG502QZWG">
    <property type="taxonomic scope" value="Eukaryota"/>
</dbReference>
<dbReference type="HOGENOM" id="CLU_1129615_0_0_1"/>
<dbReference type="InParanoid" id="P38927"/>
<dbReference type="OMA" id="CFINLIL"/>
<dbReference type="OrthoDB" id="21254at2759"/>
<dbReference type="BioCyc" id="YEAST:G3O-31390-MONOMER"/>
<dbReference type="Reactome" id="R-SCE-110312">
    <property type="pathway name" value="Translesion synthesis by REV1"/>
</dbReference>
<dbReference type="Reactome" id="R-SCE-5655862">
    <property type="pathway name" value="Translesion synthesis by POLK"/>
</dbReference>
<dbReference type="Reactome" id="R-SCE-5656121">
    <property type="pathway name" value="Translesion synthesis by POLI"/>
</dbReference>
<dbReference type="SABIO-RK" id="P38927"/>
<dbReference type="BioGRID-ORCS" id="854667">
    <property type="hits" value="0 hits in 10 CRISPR screens"/>
</dbReference>
<dbReference type="PRO" id="PR:P38927"/>
<dbReference type="Proteomes" id="UP000002311">
    <property type="component" value="Chromosome IX"/>
</dbReference>
<dbReference type="RNAct" id="P38927">
    <property type="molecule type" value="protein"/>
</dbReference>
<dbReference type="GO" id="GO:0000785">
    <property type="term" value="C:chromatin"/>
    <property type="evidence" value="ECO:0000314"/>
    <property type="project" value="SGD"/>
</dbReference>
<dbReference type="GO" id="GO:0005739">
    <property type="term" value="C:mitochondrion"/>
    <property type="evidence" value="ECO:0000314"/>
    <property type="project" value="ComplexPortal"/>
</dbReference>
<dbReference type="GO" id="GO:0005634">
    <property type="term" value="C:nucleus"/>
    <property type="evidence" value="ECO:0000303"/>
    <property type="project" value="ComplexPortal"/>
</dbReference>
<dbReference type="GO" id="GO:0016035">
    <property type="term" value="C:zeta DNA polymerase complex"/>
    <property type="evidence" value="ECO:0000314"/>
    <property type="project" value="SGD"/>
</dbReference>
<dbReference type="GO" id="GO:0070987">
    <property type="term" value="P:error-free translesion synthesis"/>
    <property type="evidence" value="ECO:0000314"/>
    <property type="project" value="SGD"/>
</dbReference>
<dbReference type="GO" id="GO:0042276">
    <property type="term" value="P:error-prone translesion synthesis"/>
    <property type="evidence" value="ECO:0000314"/>
    <property type="project" value="SGD"/>
</dbReference>
<dbReference type="Gene3D" id="3.30.900.10">
    <property type="entry name" value="HORMA domain"/>
    <property type="match status" value="1"/>
</dbReference>
<dbReference type="InterPro" id="IPR003511">
    <property type="entry name" value="HORMA_dom"/>
</dbReference>
<dbReference type="InterPro" id="IPR036570">
    <property type="entry name" value="HORMA_dom_sf"/>
</dbReference>
<dbReference type="InterPro" id="IPR045091">
    <property type="entry name" value="Mad2-like"/>
</dbReference>
<dbReference type="PANTHER" id="PTHR11842">
    <property type="entry name" value="MITOTIC SPINDLE ASSEMBLY CHECKPOINT PROTEIN MAD2"/>
    <property type="match status" value="1"/>
</dbReference>
<dbReference type="PANTHER" id="PTHR11842:SF10">
    <property type="entry name" value="MITOTIC SPINDLE ASSEMBLY CHECKPOINT PROTEIN MAD2B"/>
    <property type="match status" value="1"/>
</dbReference>
<dbReference type="Pfam" id="PF02301">
    <property type="entry name" value="HORMA"/>
    <property type="match status" value="1"/>
</dbReference>
<dbReference type="SUPFAM" id="SSF56019">
    <property type="entry name" value="The spindle assembly checkpoint protein mad2"/>
    <property type="match status" value="1"/>
</dbReference>
<dbReference type="PROSITE" id="PS50815">
    <property type="entry name" value="HORMA"/>
    <property type="match status" value="1"/>
</dbReference>